<accession>A5F0D5</accession>
<accession>C3M669</accession>
<evidence type="ECO:0000255" key="1">
    <source>
        <dbReference type="HAMAP-Rule" id="MF_01128"/>
    </source>
</evidence>
<sequence>MSTRETFKISLLAKMPKDVINQFLSKDKTPFSVLFLSLLVGILAGLVGTYFEQAVHLVSETRTDWLKSEIGSFLPLWLAAFLISAFLAFIGYFLVHRFAPEAAGSGIPEIEGAMDGMRPVRWWRVLPVKFFGGMGALGSGMVLGREGPTVQMGGAVGRMISDIFRVKNEDTRHSLLAAGAAGGLAAAFNAPLAGIMFVIEEMRPQFRYTLISVRAVIISAVAANIVFRVINGQDAVITMPQYDAPELSTLGLFLLLGALFGVFGVLFNYLITLAQDLFVKFHRNDRKRYLLTGSMIGGCFGLLLLYVPELTGGGISLIPTITNGGYGAGILLLLFVGRIFTTLLCFGSGAPGGIFAPMLALGTLFGYAFGLIAKVWFPELNIEPGMFAIAGMGALFAATVRAPITGILLVIEMTNNYHLILPLIITSLGAVIFAQLLGGQPIYSQLLHRTLKNQKLQQQDLPPQSPNS</sequence>
<reference key="1">
    <citation type="submission" date="2007-03" db="EMBL/GenBank/DDBJ databases">
        <authorList>
            <person name="Heidelberg J."/>
        </authorList>
    </citation>
    <scope>NUCLEOTIDE SEQUENCE [LARGE SCALE GENOMIC DNA]</scope>
    <source>
        <strain>ATCC 39541 / Classical Ogawa 395 / O395</strain>
    </source>
</reference>
<reference key="2">
    <citation type="journal article" date="2008" name="PLoS ONE">
        <title>A recalibrated molecular clock and independent origins for the cholera pandemic clones.</title>
        <authorList>
            <person name="Feng L."/>
            <person name="Reeves P.R."/>
            <person name="Lan R."/>
            <person name="Ren Y."/>
            <person name="Gao C."/>
            <person name="Zhou Z."/>
            <person name="Ren Y."/>
            <person name="Cheng J."/>
            <person name="Wang W."/>
            <person name="Wang J."/>
            <person name="Qian W."/>
            <person name="Li D."/>
            <person name="Wang L."/>
        </authorList>
    </citation>
    <scope>NUCLEOTIDE SEQUENCE [LARGE SCALE GENOMIC DNA]</scope>
    <source>
        <strain>ATCC 39541 / Classical Ogawa 395 / O395</strain>
    </source>
</reference>
<dbReference type="EMBL" id="CP000626">
    <property type="protein sequence ID" value="ABQ19055.1"/>
    <property type="molecule type" value="Genomic_DNA"/>
</dbReference>
<dbReference type="EMBL" id="CP001236">
    <property type="protein sequence ID" value="ACP11632.1"/>
    <property type="molecule type" value="Genomic_DNA"/>
</dbReference>
<dbReference type="RefSeq" id="WP_000107452.1">
    <property type="nucleotide sequence ID" value="NZ_JAACZH010000019.1"/>
</dbReference>
<dbReference type="SMR" id="A5F0D5"/>
<dbReference type="KEGG" id="vco:VC0395_0459"/>
<dbReference type="KEGG" id="vcr:VC395_A0798"/>
<dbReference type="PATRIC" id="fig|345073.21.peg.3530"/>
<dbReference type="eggNOG" id="COG0038">
    <property type="taxonomic scope" value="Bacteria"/>
</dbReference>
<dbReference type="HOGENOM" id="CLU_015263_7_0_6"/>
<dbReference type="OrthoDB" id="9767361at2"/>
<dbReference type="Proteomes" id="UP000000249">
    <property type="component" value="Chromosome 1"/>
</dbReference>
<dbReference type="GO" id="GO:0005886">
    <property type="term" value="C:plasma membrane"/>
    <property type="evidence" value="ECO:0007669"/>
    <property type="project" value="UniProtKB-SubCell"/>
</dbReference>
<dbReference type="GO" id="GO:0015297">
    <property type="term" value="F:antiporter activity"/>
    <property type="evidence" value="ECO:0007669"/>
    <property type="project" value="UniProtKB-UniRule"/>
</dbReference>
<dbReference type="GO" id="GO:0005247">
    <property type="term" value="F:voltage-gated chloride channel activity"/>
    <property type="evidence" value="ECO:0007669"/>
    <property type="project" value="TreeGrafter"/>
</dbReference>
<dbReference type="CDD" id="cd01031">
    <property type="entry name" value="EriC"/>
    <property type="match status" value="1"/>
</dbReference>
<dbReference type="Gene3D" id="1.10.3080.10">
    <property type="entry name" value="Clc chloride channel"/>
    <property type="match status" value="1"/>
</dbReference>
<dbReference type="HAMAP" id="MF_01128">
    <property type="entry name" value="CLC_ClcA"/>
    <property type="match status" value="1"/>
</dbReference>
<dbReference type="InterPro" id="IPR023861">
    <property type="entry name" value="Cl-channel_ClcA"/>
</dbReference>
<dbReference type="InterPro" id="IPR014743">
    <property type="entry name" value="Cl-channel_core"/>
</dbReference>
<dbReference type="InterPro" id="IPR001807">
    <property type="entry name" value="ClC"/>
</dbReference>
<dbReference type="NCBIfam" id="NF003640">
    <property type="entry name" value="PRK05277.1"/>
    <property type="match status" value="1"/>
</dbReference>
<dbReference type="PANTHER" id="PTHR45711">
    <property type="entry name" value="CHLORIDE CHANNEL PROTEIN"/>
    <property type="match status" value="1"/>
</dbReference>
<dbReference type="PANTHER" id="PTHR45711:SF6">
    <property type="entry name" value="CHLORIDE CHANNEL PROTEIN"/>
    <property type="match status" value="1"/>
</dbReference>
<dbReference type="Pfam" id="PF00654">
    <property type="entry name" value="Voltage_CLC"/>
    <property type="match status" value="1"/>
</dbReference>
<dbReference type="PRINTS" id="PR00762">
    <property type="entry name" value="CLCHANNEL"/>
</dbReference>
<dbReference type="SUPFAM" id="SSF81340">
    <property type="entry name" value="Clc chloride channel"/>
    <property type="match status" value="1"/>
</dbReference>
<gene>
    <name evidence="1" type="primary">clcA</name>
    <name type="ordered locus">VC0395_0459</name>
    <name type="ordered locus">VC395_A0798</name>
</gene>
<organism>
    <name type="scientific">Vibrio cholerae serotype O1 (strain ATCC 39541 / Classical Ogawa 395 / O395)</name>
    <dbReference type="NCBI Taxonomy" id="345073"/>
    <lineage>
        <taxon>Bacteria</taxon>
        <taxon>Pseudomonadati</taxon>
        <taxon>Pseudomonadota</taxon>
        <taxon>Gammaproteobacteria</taxon>
        <taxon>Vibrionales</taxon>
        <taxon>Vibrionaceae</taxon>
        <taxon>Vibrio</taxon>
    </lineage>
</organism>
<name>CLCA_VIBC3</name>
<proteinExistence type="inferred from homology"/>
<feature type="chain" id="PRO_1000073047" description="H(+)/Cl(-) exchange transporter ClcA">
    <location>
        <begin position="1"/>
        <end position="468"/>
    </location>
</feature>
<feature type="topological domain" description="Cytoplasmic" evidence="1">
    <location>
        <begin position="1"/>
        <end position="30"/>
    </location>
</feature>
<feature type="transmembrane region" description="Helical" evidence="1">
    <location>
        <begin position="31"/>
        <end position="67"/>
    </location>
</feature>
<feature type="topological domain" description="Periplasmic" evidence="1">
    <location>
        <begin position="68"/>
        <end position="74"/>
    </location>
</feature>
<feature type="transmembrane region" description="Helical" evidence="1">
    <location>
        <begin position="75"/>
        <end position="98"/>
    </location>
</feature>
<feature type="intramembrane region" description="Helical" evidence="1">
    <location>
        <begin position="107"/>
        <end position="114"/>
    </location>
</feature>
<feature type="topological domain" description="Cytoplasmic" evidence="1">
    <location>
        <begin position="115"/>
        <end position="121"/>
    </location>
</feature>
<feature type="transmembrane region" description="Helical" evidence="1">
    <location>
        <begin position="122"/>
        <end position="139"/>
    </location>
</feature>
<feature type="transmembrane region" description="Helical" evidence="1">
    <location>
        <begin position="146"/>
        <end position="164"/>
    </location>
</feature>
<feature type="topological domain" description="Cytoplasmic" evidence="1">
    <location>
        <begin position="165"/>
        <end position="174"/>
    </location>
</feature>
<feature type="intramembrane region" description="Helical" evidence="1">
    <location>
        <begin position="175"/>
        <end position="187"/>
    </location>
</feature>
<feature type="intramembrane region" description="Helical" evidence="1">
    <location>
        <begin position="191"/>
        <end position="199"/>
    </location>
</feature>
<feature type="topological domain" description="Cytoplasmic" evidence="1">
    <location>
        <begin position="200"/>
        <end position="212"/>
    </location>
</feature>
<feature type="transmembrane region" description="Helical" evidence="1">
    <location>
        <begin position="213"/>
        <end position="230"/>
    </location>
</feature>
<feature type="topological domain" description="Periplasmic" evidence="1">
    <location>
        <begin position="231"/>
        <end position="250"/>
    </location>
</feature>
<feature type="transmembrane region" description="Helical" evidence="1">
    <location>
        <begin position="251"/>
        <end position="279"/>
    </location>
</feature>
<feature type="topological domain" description="Cytoplasmic" evidence="1">
    <location>
        <begin position="280"/>
        <end position="285"/>
    </location>
</feature>
<feature type="transmembrane region" description="Helical" evidence="1">
    <location>
        <begin position="286"/>
        <end position="307"/>
    </location>
</feature>
<feature type="topological domain" description="Periplasmic" evidence="1">
    <location>
        <begin position="308"/>
        <end position="327"/>
    </location>
</feature>
<feature type="transmembrane region" description="Helical" evidence="1">
    <location>
        <begin position="328"/>
        <end position="347"/>
    </location>
</feature>
<feature type="transmembrane region" description="Helical" evidence="1">
    <location>
        <begin position="353"/>
        <end position="374"/>
    </location>
</feature>
<feature type="topological domain" description="Periplasmic" evidence="1">
    <location>
        <begin position="375"/>
        <end position="384"/>
    </location>
</feature>
<feature type="intramembrane region" description="Helical" evidence="1">
    <location>
        <begin position="385"/>
        <end position="399"/>
    </location>
</feature>
<feature type="intramembrane region" description="Note=Loop between two helices" evidence="1">
    <location>
        <begin position="400"/>
        <end position="402"/>
    </location>
</feature>
<feature type="intramembrane region" description="Helical" evidence="1">
    <location>
        <begin position="403"/>
        <end position="414"/>
    </location>
</feature>
<feature type="intramembrane region" description="Note=Loop between two helices" evidence="1">
    <location>
        <begin position="415"/>
        <end position="419"/>
    </location>
</feature>
<feature type="transmembrane region" description="Helical" evidence="1">
    <location>
        <begin position="420"/>
        <end position="436"/>
    </location>
</feature>
<feature type="topological domain" description="Cytoplasmic" evidence="1">
    <location>
        <begin position="437"/>
        <end position="468"/>
    </location>
</feature>
<feature type="short sequence motif" description="Selectivity filter part_1" evidence="1">
    <location>
        <begin position="104"/>
        <end position="108"/>
    </location>
</feature>
<feature type="short sequence motif" description="Selectivity filter part_2" evidence="1">
    <location>
        <begin position="144"/>
        <end position="148"/>
    </location>
</feature>
<feature type="short sequence motif" description="Selectivity filter part_3" evidence="1">
    <location>
        <begin position="353"/>
        <end position="357"/>
    </location>
</feature>
<feature type="binding site" evidence="1">
    <location>
        <position position="105"/>
    </location>
    <ligand>
        <name>chloride</name>
        <dbReference type="ChEBI" id="CHEBI:17996"/>
    </ligand>
</feature>
<feature type="binding site" evidence="1">
    <location>
        <position position="354"/>
    </location>
    <ligand>
        <name>chloride</name>
        <dbReference type="ChEBI" id="CHEBI:17996"/>
    </ligand>
</feature>
<feature type="binding site" evidence="1">
    <location>
        <position position="355"/>
    </location>
    <ligand>
        <name>chloride</name>
        <dbReference type="ChEBI" id="CHEBI:17996"/>
    </ligand>
</feature>
<feature type="binding site" evidence="1">
    <location>
        <position position="443"/>
    </location>
    <ligand>
        <name>chloride</name>
        <dbReference type="ChEBI" id="CHEBI:17996"/>
    </ligand>
</feature>
<feature type="site" description="Mediates proton transfer from the outer aqueous phase to the interior of the protein; involved in linking H(+) and Cl(-) transport" evidence="1">
    <location>
        <position position="146"/>
    </location>
</feature>
<feature type="site" description="Mediates proton transfer from the protein to the inner aqueous phase" evidence="1">
    <location>
        <position position="201"/>
    </location>
</feature>
<protein>
    <recommendedName>
        <fullName evidence="1">H(+)/Cl(-) exchange transporter ClcA</fullName>
    </recommendedName>
</protein>
<comment type="function">
    <text evidence="1">Proton-coupled chloride transporter. Functions as antiport system and exchanges two chloride ions for 1 proton. Probably acts as an electrical shunt for an outwardly-directed proton pump that is linked to amino acid decarboxylation, as part of the extreme acid resistance (XAR) response.</text>
</comment>
<comment type="catalytic activity">
    <reaction evidence="1">
        <text>2 chloride(in) + H(+)(out) = 2 chloride(out) + H(+)(in)</text>
        <dbReference type="Rhea" id="RHEA:29567"/>
        <dbReference type="ChEBI" id="CHEBI:15378"/>
        <dbReference type="ChEBI" id="CHEBI:17996"/>
    </reaction>
</comment>
<comment type="subunit">
    <text evidence="1">Homodimer.</text>
</comment>
<comment type="subcellular location">
    <subcellularLocation>
        <location evidence="1">Cell inner membrane</location>
        <topology evidence="1">Multi-pass membrane protein</topology>
    </subcellularLocation>
</comment>
<comment type="similarity">
    <text evidence="1">Belongs to the chloride channel (TC 2.A.49) family. ClcA subfamily.</text>
</comment>
<keyword id="KW-0050">Antiport</keyword>
<keyword id="KW-0997">Cell inner membrane</keyword>
<keyword id="KW-1003">Cell membrane</keyword>
<keyword id="KW-0868">Chloride</keyword>
<keyword id="KW-0406">Ion transport</keyword>
<keyword id="KW-0472">Membrane</keyword>
<keyword id="KW-0812">Transmembrane</keyword>
<keyword id="KW-1133">Transmembrane helix</keyword>
<keyword id="KW-0813">Transport</keyword>